<proteinExistence type="evidence at transcript level"/>
<feature type="chain" id="PRO_0000452766" description="Ustilagic acid biosynthesis cluster protein orf2">
    <location>
        <begin position="1"/>
        <end position="382"/>
    </location>
</feature>
<feature type="region of interest" description="Disordered" evidence="1">
    <location>
        <begin position="1"/>
        <end position="22"/>
    </location>
</feature>
<feature type="compositionally biased region" description="Polar residues" evidence="1">
    <location>
        <begin position="1"/>
        <end position="20"/>
    </location>
</feature>
<keyword id="KW-1185">Reference proteome</keyword>
<gene>
    <name evidence="5" type="primary">orf2</name>
    <name type="ORF">UMAG_06465</name>
</gene>
<accession>A0A0D1DNX6</accession>
<dbReference type="EMBL" id="CM003162">
    <property type="protein sequence ID" value="KIS65761.1"/>
    <property type="molecule type" value="Genomic_DNA"/>
</dbReference>
<dbReference type="RefSeq" id="XP_011392732.1">
    <property type="nucleotide sequence ID" value="XM_011394430.1"/>
</dbReference>
<dbReference type="SMR" id="A0A0D1DNX6"/>
<dbReference type="EnsemblFungi" id="KIS65761">
    <property type="protein sequence ID" value="KIS65761"/>
    <property type="gene ID" value="UMAG_06465"/>
</dbReference>
<dbReference type="GeneID" id="23566046"/>
<dbReference type="KEGG" id="uma:UMAG_06465"/>
<dbReference type="VEuPathDB" id="FungiDB:UMAG_06465"/>
<dbReference type="eggNOG" id="ENOG502TDMK">
    <property type="taxonomic scope" value="Eukaryota"/>
</dbReference>
<dbReference type="InParanoid" id="A0A0D1DNX6"/>
<dbReference type="OrthoDB" id="2532955at2759"/>
<dbReference type="Proteomes" id="UP000000561">
    <property type="component" value="Chromosome 23"/>
</dbReference>
<dbReference type="Gene3D" id="2.40.160.210">
    <property type="entry name" value="Acyl-CoA thioesterase, double hotdog domain"/>
    <property type="match status" value="1"/>
</dbReference>
<dbReference type="InterPro" id="IPR042171">
    <property type="entry name" value="Acyl-CoA_hotdog"/>
</dbReference>
<dbReference type="InterPro" id="IPR029069">
    <property type="entry name" value="HotDog_dom_sf"/>
</dbReference>
<dbReference type="InterPro" id="IPR052389">
    <property type="entry name" value="Sec_Metab_Biosynth-Assoc"/>
</dbReference>
<dbReference type="InterPro" id="IPR049449">
    <property type="entry name" value="TesB_ACOT8-like_N"/>
</dbReference>
<dbReference type="PANTHER" id="PTHR38110">
    <property type="entry name" value="CHROMOSOME 23, WHOLE GENOME SHOTGUN SEQUENCE"/>
    <property type="match status" value="1"/>
</dbReference>
<dbReference type="PANTHER" id="PTHR38110:SF1">
    <property type="entry name" value="THIOESTERASE DOMAIN-CONTAINING PROTEIN"/>
    <property type="match status" value="1"/>
</dbReference>
<dbReference type="Pfam" id="PF13622">
    <property type="entry name" value="4HBT_3"/>
    <property type="match status" value="1"/>
</dbReference>
<dbReference type="SUPFAM" id="SSF54637">
    <property type="entry name" value="Thioesterase/thiol ester dehydrase-isomerase"/>
    <property type="match status" value="1"/>
</dbReference>
<name>ORF2_MYCMD</name>
<protein>
    <recommendedName>
        <fullName evidence="5">Ustilagic acid biosynthesis cluster protein orf2</fullName>
    </recommendedName>
</protein>
<organism>
    <name type="scientific">Mycosarcoma maydis</name>
    <name type="common">Corn smut fungus</name>
    <name type="synonym">Ustilago maydis</name>
    <dbReference type="NCBI Taxonomy" id="5270"/>
    <lineage>
        <taxon>Eukaryota</taxon>
        <taxon>Fungi</taxon>
        <taxon>Dikarya</taxon>
        <taxon>Basidiomycota</taxon>
        <taxon>Ustilaginomycotina</taxon>
        <taxon>Ustilaginomycetes</taxon>
        <taxon>Ustilaginales</taxon>
        <taxon>Ustilaginaceae</taxon>
        <taxon>Mycosarcoma</taxon>
    </lineage>
</organism>
<evidence type="ECO:0000256" key="1">
    <source>
        <dbReference type="SAM" id="MobiDB-lite"/>
    </source>
</evidence>
<evidence type="ECO:0000269" key="2">
    <source>
    </source>
</evidence>
<evidence type="ECO:0000269" key="3">
    <source>
    </source>
</evidence>
<evidence type="ECO:0000269" key="4">
    <source>
    </source>
</evidence>
<evidence type="ECO:0000303" key="5">
    <source>
    </source>
</evidence>
<evidence type="ECO:0000305" key="6">
    <source>
    </source>
</evidence>
<sequence>MLQEAKVSTHTSNPLSQSVPQYGHSFDEATRVERLDSAPESLASVASTKLKDTTVWYRLAIQSEWCSTPQVPHGGFLASLLLSALLEHQQSQQHPDPYTLSYDFLKVLSPGEAFISVTSLGKVSGSFTSIAAELYQSRKEKVLLGVSVRGSFVNLSKQQGKSVLPLHYGAVSKLEEVPVPHPRSWYLPPSQAMISRQLDLLVKLETQRRPFSDYFVRFHPDDVDTPQQEDYSEEHASADLQSSPHYCKGSRILPLRSSHSRRIDAKSIPMFGDFRRPAYENVIKQDPCHPHDVPTRKFAFPTLQYTIRFLAKVPHDTEWLHTQWRETVVDGRIISDVYITTEQGAEPVAICQLDSLMFDMQWALSTMPSAEKSKKSPEASQL</sequence>
<comment type="function">
    <text evidence="2 3 6">Part of the gene cluster that mediates the biosynthesis of the glycolipid biosurfactant ustilagic acid (UA) (PubMed:15932999, PubMed:17850255). UA is a secreted cellobiose glycolipid that is toxic for many microorganisms and confers biocontrol activity to U.maydis (PubMed:15932999, PubMed:17850255). UA consists of 15,16-dihydroxypalmitic or 2,15,16-trihydroxypalmitic acid, which is O-glycosidically linked to cellobiose at its terminal hydroxyl group (PubMed:17850255). In addition, the cellobiose moiety is acetylated and acylated with a short-chain hydroxy fatty acid (PubMed:17850255). UA biosynthesis starts with omega-hydroxylation of palmitic acid catalyzed by the cytochrome P450 monooxygenase cyp1 (PubMed:17850255). Terminal hydroxylation of palmitic acid precedes subterminal hydroxylation catalyzed by the cytochrome P450 monooxygenase cyp2 (PubMed:17850255). Sequential glucosylation of the hydroxy fatty acid is probably catalyzed by the glycosyltransferase ugt1 (Probable). The cellobiose lipid is further decorated by acetylation of the proximal glucose residue and by acylation with a short-chain beta-hydroxy fatty acid at the distal glucose residue (Probable). The acyltransferase uat1 may be a good candidate for catalyzing either acetylation or acylation of the cellobiose lipid (Probable). The fatty acid synthase fas2 may be involved in synthesis of the carbon backbone of the short-chain beta-hydroxy fatty acid esterified to the cellobiose disaccharide (Probable). The secreted UA consists of a mixture of both alpha-hydroxylated and non-hydroxylated glycolipids; therefore, alpha-hydroxylation of the long-chain fatty, catalyzed by the fatty acid hydroxylase ahd1, occurs late in UA biosynthesis and may be the last step before secretion (PubMed:17850255).</text>
</comment>
<comment type="pathway">
    <text evidence="6">Secondary metabolite biosynthesis.</text>
</comment>
<comment type="induction">
    <text evidence="3 4">Expression is strongly induced under conditions of nitrogen starvation (PubMed:17850255). Expression is positively regulated by the cluster-specific transcription factor rua1 that recognizes and binds to the specific 5'-T/G-G/T-C-G-C-A-T-A/T-C/T-C/T-G/A-3' upstream activating sequence found in all promoters of the UA biosynthesis genes (PubMed:20173069).</text>
</comment>
<reference key="1">
    <citation type="journal article" date="2006" name="Nature">
        <title>Insights from the genome of the biotrophic fungal plant pathogen Ustilago maydis.</title>
        <authorList>
            <person name="Kaemper J."/>
            <person name="Kahmann R."/>
            <person name="Boelker M."/>
            <person name="Ma L.-J."/>
            <person name="Brefort T."/>
            <person name="Saville B.J."/>
            <person name="Banuett F."/>
            <person name="Kronstad J.W."/>
            <person name="Gold S.E."/>
            <person name="Mueller O."/>
            <person name="Perlin M.H."/>
            <person name="Woesten H.A.B."/>
            <person name="de Vries R."/>
            <person name="Ruiz-Herrera J."/>
            <person name="Reynaga-Pena C.G."/>
            <person name="Snetselaar K."/>
            <person name="McCann M."/>
            <person name="Perez-Martin J."/>
            <person name="Feldbruegge M."/>
            <person name="Basse C.W."/>
            <person name="Steinberg G."/>
            <person name="Ibeas J.I."/>
            <person name="Holloman W."/>
            <person name="Guzman P."/>
            <person name="Farman M.L."/>
            <person name="Stajich J.E."/>
            <person name="Sentandreu R."/>
            <person name="Gonzalez-Prieto J.M."/>
            <person name="Kennell J.C."/>
            <person name="Molina L."/>
            <person name="Schirawski J."/>
            <person name="Mendoza-Mendoza A."/>
            <person name="Greilinger D."/>
            <person name="Muench K."/>
            <person name="Roessel N."/>
            <person name="Scherer M."/>
            <person name="Vranes M."/>
            <person name="Ladendorf O."/>
            <person name="Vincon V."/>
            <person name="Fuchs U."/>
            <person name="Sandrock B."/>
            <person name="Meng S."/>
            <person name="Ho E.C.H."/>
            <person name="Cahill M.J."/>
            <person name="Boyce K.J."/>
            <person name="Klose J."/>
            <person name="Klosterman S.J."/>
            <person name="Deelstra H.J."/>
            <person name="Ortiz-Castellanos L."/>
            <person name="Li W."/>
            <person name="Sanchez-Alonso P."/>
            <person name="Schreier P.H."/>
            <person name="Haeuser-Hahn I."/>
            <person name="Vaupel M."/>
            <person name="Koopmann E."/>
            <person name="Friedrich G."/>
            <person name="Voss H."/>
            <person name="Schlueter T."/>
            <person name="Margolis J."/>
            <person name="Platt D."/>
            <person name="Swimmer C."/>
            <person name="Gnirke A."/>
            <person name="Chen F."/>
            <person name="Vysotskaia V."/>
            <person name="Mannhaupt G."/>
            <person name="Gueldener U."/>
            <person name="Muensterkoetter M."/>
            <person name="Haase D."/>
            <person name="Oesterheld M."/>
            <person name="Mewes H.-W."/>
            <person name="Mauceli E.W."/>
            <person name="DeCaprio D."/>
            <person name="Wade C.M."/>
            <person name="Butler J."/>
            <person name="Young S.K."/>
            <person name="Jaffe D.B."/>
            <person name="Calvo S.E."/>
            <person name="Nusbaum C."/>
            <person name="Galagan J.E."/>
            <person name="Birren B.W."/>
        </authorList>
    </citation>
    <scope>NUCLEOTIDE SEQUENCE [LARGE SCALE GENOMIC DNA]</scope>
    <source>
        <strain>DSM 14603 / FGSC 9021 / UM521</strain>
    </source>
</reference>
<reference key="2">
    <citation type="submission" date="2014-09" db="EMBL/GenBank/DDBJ databases">
        <authorList>
            <person name="Gueldener U."/>
            <person name="Muensterkoetter M."/>
            <person name="Walter M.C."/>
            <person name="Mannhaupt G."/>
            <person name="Kahmann R."/>
        </authorList>
    </citation>
    <scope>GENOME REANNOTATION</scope>
    <source>
        <strain>DSM 14603 / FGSC 9021 / UM521</strain>
    </source>
</reference>
<reference key="3">
    <citation type="journal article" date="2005" name="Appl. Environ. Microbiol.">
        <title>Genetic analysis of biosurfactant production in Ustilago maydis.</title>
        <authorList>
            <person name="Hewald S."/>
            <person name="Josephs K."/>
            <person name="Boelker M."/>
        </authorList>
    </citation>
    <scope>FUNCTION</scope>
</reference>
<reference key="4">
    <citation type="journal article" date="2007" name="Mol. Microbiol.">
        <title>A biosynthetic gene cluster for a secreted cellobiose lipid with antifungal activity from Ustilago maydis.</title>
        <authorList>
            <person name="Teichmann B."/>
            <person name="Linne U."/>
            <person name="Hewald S."/>
            <person name="Marahiel M.A."/>
            <person name="Boelker M."/>
        </authorList>
    </citation>
    <scope>FUNCTION</scope>
    <scope>INDUCTION</scope>
    <scope>PATHWAY</scope>
</reference>
<reference key="5">
    <citation type="journal article" date="2010" name="Appl. Environ. Microbiol.">
        <title>Activation of the ustilagic acid biosynthesis gene cluster in Ustilago maydis by the C2H2 zinc finger transcription factor Rua1.</title>
        <authorList>
            <person name="Teichmann B."/>
            <person name="Liu L."/>
            <person name="Schink K.O."/>
            <person name="Boelker M."/>
        </authorList>
    </citation>
    <scope>INDUCTION</scope>
</reference>